<gene>
    <name evidence="1" type="primary">udk</name>
    <name type="ordered locus">STY2335</name>
    <name type="ordered locus">t0750</name>
</gene>
<accession>P67409</accession>
<accession>Q8XEY2</accession>
<comment type="catalytic activity">
    <reaction evidence="1">
        <text>uridine + ATP = UMP + ADP + H(+)</text>
        <dbReference type="Rhea" id="RHEA:16825"/>
        <dbReference type="ChEBI" id="CHEBI:15378"/>
        <dbReference type="ChEBI" id="CHEBI:16704"/>
        <dbReference type="ChEBI" id="CHEBI:30616"/>
        <dbReference type="ChEBI" id="CHEBI:57865"/>
        <dbReference type="ChEBI" id="CHEBI:456216"/>
        <dbReference type="EC" id="2.7.1.48"/>
    </reaction>
</comment>
<comment type="catalytic activity">
    <reaction evidence="1">
        <text>cytidine + ATP = CMP + ADP + H(+)</text>
        <dbReference type="Rhea" id="RHEA:24674"/>
        <dbReference type="ChEBI" id="CHEBI:15378"/>
        <dbReference type="ChEBI" id="CHEBI:17562"/>
        <dbReference type="ChEBI" id="CHEBI:30616"/>
        <dbReference type="ChEBI" id="CHEBI:60377"/>
        <dbReference type="ChEBI" id="CHEBI:456216"/>
        <dbReference type="EC" id="2.7.1.48"/>
    </reaction>
</comment>
<comment type="pathway">
    <text evidence="1">Pyrimidine metabolism; CTP biosynthesis via salvage pathway; CTP from cytidine: step 1/3.</text>
</comment>
<comment type="pathway">
    <text evidence="1">Pyrimidine metabolism; UMP biosynthesis via salvage pathway; UMP from uridine: step 1/1.</text>
</comment>
<comment type="subcellular location">
    <subcellularLocation>
        <location evidence="1">Cytoplasm</location>
    </subcellularLocation>
</comment>
<comment type="similarity">
    <text evidence="1">Belongs to the uridine kinase family.</text>
</comment>
<organism>
    <name type="scientific">Salmonella typhi</name>
    <dbReference type="NCBI Taxonomy" id="90370"/>
    <lineage>
        <taxon>Bacteria</taxon>
        <taxon>Pseudomonadati</taxon>
        <taxon>Pseudomonadota</taxon>
        <taxon>Gammaproteobacteria</taxon>
        <taxon>Enterobacterales</taxon>
        <taxon>Enterobacteriaceae</taxon>
        <taxon>Salmonella</taxon>
    </lineage>
</organism>
<reference key="1">
    <citation type="journal article" date="2001" name="Nature">
        <title>Complete genome sequence of a multiple drug resistant Salmonella enterica serovar Typhi CT18.</title>
        <authorList>
            <person name="Parkhill J."/>
            <person name="Dougan G."/>
            <person name="James K.D."/>
            <person name="Thomson N.R."/>
            <person name="Pickard D."/>
            <person name="Wain J."/>
            <person name="Churcher C.M."/>
            <person name="Mungall K.L."/>
            <person name="Bentley S.D."/>
            <person name="Holden M.T.G."/>
            <person name="Sebaihia M."/>
            <person name="Baker S."/>
            <person name="Basham D."/>
            <person name="Brooks K."/>
            <person name="Chillingworth T."/>
            <person name="Connerton P."/>
            <person name="Cronin A."/>
            <person name="Davis P."/>
            <person name="Davies R.M."/>
            <person name="Dowd L."/>
            <person name="White N."/>
            <person name="Farrar J."/>
            <person name="Feltwell T."/>
            <person name="Hamlin N."/>
            <person name="Haque A."/>
            <person name="Hien T.T."/>
            <person name="Holroyd S."/>
            <person name="Jagels K."/>
            <person name="Krogh A."/>
            <person name="Larsen T.S."/>
            <person name="Leather S."/>
            <person name="Moule S."/>
            <person name="O'Gaora P."/>
            <person name="Parry C."/>
            <person name="Quail M.A."/>
            <person name="Rutherford K.M."/>
            <person name="Simmonds M."/>
            <person name="Skelton J."/>
            <person name="Stevens K."/>
            <person name="Whitehead S."/>
            <person name="Barrell B.G."/>
        </authorList>
    </citation>
    <scope>NUCLEOTIDE SEQUENCE [LARGE SCALE GENOMIC DNA]</scope>
    <source>
        <strain>CT18</strain>
    </source>
</reference>
<reference key="2">
    <citation type="journal article" date="2003" name="J. Bacteriol.">
        <title>Comparative genomics of Salmonella enterica serovar Typhi strains Ty2 and CT18.</title>
        <authorList>
            <person name="Deng W."/>
            <person name="Liou S.-R."/>
            <person name="Plunkett G. III"/>
            <person name="Mayhew G.F."/>
            <person name="Rose D.J."/>
            <person name="Burland V."/>
            <person name="Kodoyianni V."/>
            <person name="Schwartz D.C."/>
            <person name="Blattner F.R."/>
        </authorList>
    </citation>
    <scope>NUCLEOTIDE SEQUENCE [LARGE SCALE GENOMIC DNA]</scope>
    <source>
        <strain>ATCC 700931 / Ty2</strain>
    </source>
</reference>
<evidence type="ECO:0000255" key="1">
    <source>
        <dbReference type="HAMAP-Rule" id="MF_00551"/>
    </source>
</evidence>
<feature type="chain" id="PRO_0000164485" description="Uridine kinase">
    <location>
        <begin position="1"/>
        <end position="213"/>
    </location>
</feature>
<feature type="binding site" evidence="1">
    <location>
        <begin position="15"/>
        <end position="22"/>
    </location>
    <ligand>
        <name>ATP</name>
        <dbReference type="ChEBI" id="CHEBI:30616"/>
    </ligand>
</feature>
<proteinExistence type="inferred from homology"/>
<keyword id="KW-0067">ATP-binding</keyword>
<keyword id="KW-0963">Cytoplasm</keyword>
<keyword id="KW-0418">Kinase</keyword>
<keyword id="KW-0547">Nucleotide-binding</keyword>
<keyword id="KW-0808">Transferase</keyword>
<dbReference type="EC" id="2.7.1.48" evidence="1"/>
<dbReference type="EMBL" id="AL513382">
    <property type="protein sequence ID" value="CAD02485.1"/>
    <property type="molecule type" value="Genomic_DNA"/>
</dbReference>
<dbReference type="EMBL" id="AE014613">
    <property type="protein sequence ID" value="AAO68443.1"/>
    <property type="molecule type" value="Genomic_DNA"/>
</dbReference>
<dbReference type="RefSeq" id="NP_456668.1">
    <property type="nucleotide sequence ID" value="NC_003198.1"/>
</dbReference>
<dbReference type="RefSeq" id="WP_000132082.1">
    <property type="nucleotide sequence ID" value="NZ_WSUR01000002.1"/>
</dbReference>
<dbReference type="SMR" id="P67409"/>
<dbReference type="STRING" id="220341.gene:17586240"/>
<dbReference type="GeneID" id="66756602"/>
<dbReference type="KEGG" id="stt:t0750"/>
<dbReference type="KEGG" id="sty:STY2335"/>
<dbReference type="PATRIC" id="fig|220341.7.peg.2357"/>
<dbReference type="eggNOG" id="COG0572">
    <property type="taxonomic scope" value="Bacteria"/>
</dbReference>
<dbReference type="HOGENOM" id="CLU_021278_1_2_6"/>
<dbReference type="OMA" id="TVKPMHE"/>
<dbReference type="OrthoDB" id="9777642at2"/>
<dbReference type="UniPathway" id="UPA00574">
    <property type="reaction ID" value="UER00637"/>
</dbReference>
<dbReference type="UniPathway" id="UPA00579">
    <property type="reaction ID" value="UER00640"/>
</dbReference>
<dbReference type="Proteomes" id="UP000000541">
    <property type="component" value="Chromosome"/>
</dbReference>
<dbReference type="Proteomes" id="UP000002670">
    <property type="component" value="Chromosome"/>
</dbReference>
<dbReference type="GO" id="GO:0005737">
    <property type="term" value="C:cytoplasm"/>
    <property type="evidence" value="ECO:0007669"/>
    <property type="project" value="UniProtKB-SubCell"/>
</dbReference>
<dbReference type="GO" id="GO:0005524">
    <property type="term" value="F:ATP binding"/>
    <property type="evidence" value="ECO:0007669"/>
    <property type="project" value="UniProtKB-UniRule"/>
</dbReference>
<dbReference type="GO" id="GO:0043771">
    <property type="term" value="F:cytidine kinase activity"/>
    <property type="evidence" value="ECO:0007669"/>
    <property type="project" value="RHEA"/>
</dbReference>
<dbReference type="GO" id="GO:0004849">
    <property type="term" value="F:uridine kinase activity"/>
    <property type="evidence" value="ECO:0007669"/>
    <property type="project" value="UniProtKB-UniRule"/>
</dbReference>
<dbReference type="GO" id="GO:0044211">
    <property type="term" value="P:CTP salvage"/>
    <property type="evidence" value="ECO:0007669"/>
    <property type="project" value="UniProtKB-UniRule"/>
</dbReference>
<dbReference type="GO" id="GO:0044206">
    <property type="term" value="P:UMP salvage"/>
    <property type="evidence" value="ECO:0007669"/>
    <property type="project" value="UniProtKB-UniRule"/>
</dbReference>
<dbReference type="CDD" id="cd02023">
    <property type="entry name" value="UMPK"/>
    <property type="match status" value="1"/>
</dbReference>
<dbReference type="FunFam" id="3.40.50.300:FF:000252">
    <property type="entry name" value="Uridine kinase"/>
    <property type="match status" value="1"/>
</dbReference>
<dbReference type="Gene3D" id="3.40.50.300">
    <property type="entry name" value="P-loop containing nucleotide triphosphate hydrolases"/>
    <property type="match status" value="1"/>
</dbReference>
<dbReference type="HAMAP" id="MF_00551">
    <property type="entry name" value="Uridine_kinase"/>
    <property type="match status" value="1"/>
</dbReference>
<dbReference type="InterPro" id="IPR027417">
    <property type="entry name" value="P-loop_NTPase"/>
</dbReference>
<dbReference type="InterPro" id="IPR006083">
    <property type="entry name" value="PRK/URK"/>
</dbReference>
<dbReference type="InterPro" id="IPR026008">
    <property type="entry name" value="Uridine_kinase"/>
</dbReference>
<dbReference type="InterPro" id="IPR000764">
    <property type="entry name" value="Uridine_kinase-like"/>
</dbReference>
<dbReference type="NCBIfam" id="NF004018">
    <property type="entry name" value="PRK05480.1"/>
    <property type="match status" value="1"/>
</dbReference>
<dbReference type="NCBIfam" id="TIGR00235">
    <property type="entry name" value="udk"/>
    <property type="match status" value="1"/>
</dbReference>
<dbReference type="PANTHER" id="PTHR10285">
    <property type="entry name" value="URIDINE KINASE"/>
    <property type="match status" value="1"/>
</dbReference>
<dbReference type="Pfam" id="PF00485">
    <property type="entry name" value="PRK"/>
    <property type="match status" value="1"/>
</dbReference>
<dbReference type="PRINTS" id="PR00988">
    <property type="entry name" value="URIDINKINASE"/>
</dbReference>
<dbReference type="SUPFAM" id="SSF52540">
    <property type="entry name" value="P-loop containing nucleoside triphosphate hydrolases"/>
    <property type="match status" value="1"/>
</dbReference>
<name>URK_SALTI</name>
<sequence>MTDQSHQCVIIGIAGASASGKSLIASTLYRELREQVGDEHIGVIPEDSYYKDQSHLSMEERVKTNYDHPNAMDHSLLFQHLQALKRGSAIELPVYSYVEHTRMQETVRVEPKKVIILEGILLLTDARLREEMNFSIFVDTPLDICLMRRIKRDVNERGRSMDSVMAQYQKTVRPMFLQFIEPSKQYADIIVPRGGKNRIAIDILKAKISQFFE</sequence>
<protein>
    <recommendedName>
        <fullName evidence="1">Uridine kinase</fullName>
        <ecNumber evidence="1">2.7.1.48</ecNumber>
    </recommendedName>
    <alternativeName>
        <fullName evidence="1">Cytidine monophosphokinase</fullName>
    </alternativeName>
    <alternativeName>
        <fullName evidence="1">Uridine monophosphokinase</fullName>
    </alternativeName>
</protein>